<dbReference type="EMBL" id="CP001280">
    <property type="protein sequence ID" value="ACK52724.1"/>
    <property type="molecule type" value="Genomic_DNA"/>
</dbReference>
<dbReference type="RefSeq" id="WP_012592792.1">
    <property type="nucleotide sequence ID" value="NC_011666.1"/>
</dbReference>
<dbReference type="SMR" id="B8EMP5"/>
<dbReference type="STRING" id="395965.Msil_3842"/>
<dbReference type="KEGG" id="msl:Msil_3842"/>
<dbReference type="eggNOG" id="COG0267">
    <property type="taxonomic scope" value="Bacteria"/>
</dbReference>
<dbReference type="HOGENOM" id="CLU_190949_1_1_5"/>
<dbReference type="OrthoDB" id="21586at2"/>
<dbReference type="Proteomes" id="UP000002257">
    <property type="component" value="Chromosome"/>
</dbReference>
<dbReference type="GO" id="GO:0022625">
    <property type="term" value="C:cytosolic large ribosomal subunit"/>
    <property type="evidence" value="ECO:0007669"/>
    <property type="project" value="TreeGrafter"/>
</dbReference>
<dbReference type="GO" id="GO:0003735">
    <property type="term" value="F:structural constituent of ribosome"/>
    <property type="evidence" value="ECO:0007669"/>
    <property type="project" value="InterPro"/>
</dbReference>
<dbReference type="GO" id="GO:0006412">
    <property type="term" value="P:translation"/>
    <property type="evidence" value="ECO:0007669"/>
    <property type="project" value="UniProtKB-UniRule"/>
</dbReference>
<dbReference type="Gene3D" id="2.20.28.120">
    <property type="entry name" value="Ribosomal protein L33"/>
    <property type="match status" value="1"/>
</dbReference>
<dbReference type="HAMAP" id="MF_00294">
    <property type="entry name" value="Ribosomal_bL33"/>
    <property type="match status" value="1"/>
</dbReference>
<dbReference type="InterPro" id="IPR001705">
    <property type="entry name" value="Ribosomal_bL33"/>
</dbReference>
<dbReference type="InterPro" id="IPR018264">
    <property type="entry name" value="Ribosomal_bL33_CS"/>
</dbReference>
<dbReference type="InterPro" id="IPR038584">
    <property type="entry name" value="Ribosomal_bL33_sf"/>
</dbReference>
<dbReference type="InterPro" id="IPR011332">
    <property type="entry name" value="Ribosomal_zn-bd"/>
</dbReference>
<dbReference type="NCBIfam" id="NF001860">
    <property type="entry name" value="PRK00595.1"/>
    <property type="match status" value="1"/>
</dbReference>
<dbReference type="NCBIfam" id="TIGR01023">
    <property type="entry name" value="rpmG_bact"/>
    <property type="match status" value="1"/>
</dbReference>
<dbReference type="PANTHER" id="PTHR15238">
    <property type="entry name" value="54S RIBOSOMAL PROTEIN L39, MITOCHONDRIAL"/>
    <property type="match status" value="1"/>
</dbReference>
<dbReference type="PANTHER" id="PTHR15238:SF1">
    <property type="entry name" value="LARGE RIBOSOMAL SUBUNIT PROTEIN BL33M"/>
    <property type="match status" value="1"/>
</dbReference>
<dbReference type="Pfam" id="PF00471">
    <property type="entry name" value="Ribosomal_L33"/>
    <property type="match status" value="1"/>
</dbReference>
<dbReference type="SUPFAM" id="SSF57829">
    <property type="entry name" value="Zn-binding ribosomal proteins"/>
    <property type="match status" value="1"/>
</dbReference>
<dbReference type="PROSITE" id="PS00582">
    <property type="entry name" value="RIBOSOMAL_L33"/>
    <property type="match status" value="1"/>
</dbReference>
<evidence type="ECO:0000255" key="1">
    <source>
        <dbReference type="HAMAP-Rule" id="MF_00294"/>
    </source>
</evidence>
<evidence type="ECO:0000305" key="2"/>
<reference key="1">
    <citation type="journal article" date="2010" name="J. Bacteriol.">
        <title>Complete genome sequence of the aerobic facultative methanotroph Methylocella silvestris BL2.</title>
        <authorList>
            <person name="Chen Y."/>
            <person name="Crombie A."/>
            <person name="Rahman M.T."/>
            <person name="Dedysh S.N."/>
            <person name="Liesack W."/>
            <person name="Stott M.B."/>
            <person name="Alam M."/>
            <person name="Theisen A.R."/>
            <person name="Murrell J.C."/>
            <person name="Dunfield P.F."/>
        </authorList>
    </citation>
    <scope>NUCLEOTIDE SEQUENCE [LARGE SCALE GENOMIC DNA]</scope>
    <source>
        <strain>DSM 15510 / CIP 108128 / LMG 27833 / NCIMB 13906 / BL2</strain>
    </source>
</reference>
<keyword id="KW-1185">Reference proteome</keyword>
<keyword id="KW-0687">Ribonucleoprotein</keyword>
<keyword id="KW-0689">Ribosomal protein</keyword>
<proteinExistence type="inferred from homology"/>
<organism>
    <name type="scientific">Methylocella silvestris (strain DSM 15510 / CIP 108128 / LMG 27833 / NCIMB 13906 / BL2)</name>
    <dbReference type="NCBI Taxonomy" id="395965"/>
    <lineage>
        <taxon>Bacteria</taxon>
        <taxon>Pseudomonadati</taxon>
        <taxon>Pseudomonadota</taxon>
        <taxon>Alphaproteobacteria</taxon>
        <taxon>Hyphomicrobiales</taxon>
        <taxon>Beijerinckiaceae</taxon>
        <taxon>Methylocella</taxon>
    </lineage>
</organism>
<name>RL33_METSB</name>
<protein>
    <recommendedName>
        <fullName evidence="1">Large ribosomal subunit protein bL33</fullName>
    </recommendedName>
    <alternativeName>
        <fullName evidence="2">50S ribosomal protein L33</fullName>
    </alternativeName>
</protein>
<accession>B8EMP5</accession>
<comment type="similarity">
    <text evidence="1">Belongs to the bacterial ribosomal protein bL33 family.</text>
</comment>
<gene>
    <name evidence="1" type="primary">rpmG</name>
    <name type="ordered locus">Msil_3842</name>
</gene>
<sequence>MAKAAMLKIKLLSTADTGYFYVTKKNARTKTEKLSFKKYDPVVRKHVEFKETKIK</sequence>
<feature type="chain" id="PRO_1000194060" description="Large ribosomal subunit protein bL33">
    <location>
        <begin position="1"/>
        <end position="55"/>
    </location>
</feature>